<comment type="caution">
    <text evidence="1">Product of a dubious gene prediction.</text>
</comment>
<evidence type="ECO:0000305" key="1"/>
<accession>P03164</accession>
<reference key="1">
    <citation type="journal article" date="1979" name="Nature">
        <title>Nucleotide sequence of the hepatitis B virus genome (subtype ayw) cloned in E. coli.</title>
        <authorList>
            <person name="Galibert F."/>
            <person name="Mandart E."/>
            <person name="Fitoussi F."/>
            <person name="Tiollais P."/>
            <person name="Charnay P."/>
        </authorList>
    </citation>
    <scope>NUCLEOTIDE SEQUENCE [GENOMIC DNA]</scope>
</reference>
<organismHost>
    <name type="scientific">Homo sapiens</name>
    <name type="common">Human</name>
    <dbReference type="NCBI Taxonomy" id="9606"/>
</organismHost>
<organismHost>
    <name type="scientific">Pan troglodytes</name>
    <name type="common">Chimpanzee</name>
    <dbReference type="NCBI Taxonomy" id="9598"/>
</organismHost>
<dbReference type="EMBL" id="V01460">
    <property type="status" value="NOT_ANNOTATED_CDS"/>
    <property type="molecule type" value="Genomic_DNA"/>
</dbReference>
<dbReference type="PIR" id="A03718">
    <property type="entry name" value="A03718"/>
</dbReference>
<dbReference type="SMR" id="P03164"/>
<dbReference type="Proteomes" id="UP000007930">
    <property type="component" value="Segment"/>
</dbReference>
<organism>
    <name type="scientific">Hepatitis B virus genotype D subtype ayw (isolate France/Tiollais/1979)</name>
    <name type="common">HBV-D</name>
    <dbReference type="NCBI Taxonomy" id="490133"/>
    <lineage>
        <taxon>Viruses</taxon>
        <taxon>Riboviria</taxon>
        <taxon>Pararnavirae</taxon>
        <taxon>Artverviricota</taxon>
        <taxon>Revtraviricetes</taxon>
        <taxon>Blubervirales</taxon>
        <taxon>Hepadnaviridae</taxon>
        <taxon>Orthohepadnavirus</taxon>
        <taxon>Hepatitis B virus</taxon>
        <taxon>hepatitis B virus genotype D</taxon>
    </lineage>
</organism>
<sequence>MDRQRSRKGSTHALMAHDQAPASGGCVSKHLAQTWPLPGNGVKVQVLFTQKGLVSWRESESLLRLNTCIQRHQRRITTLCKRGSKTQKTHNSLTYFPINRPVNRKFSKTFFDFLYDVFLWQGPITSNDITHKI</sequence>
<name>Y15K_HBVD3</name>
<protein>
    <recommendedName>
        <fullName>Putative uncharacterized 15.3 kDa protein</fullName>
    </recommendedName>
</protein>
<proteinExistence type="uncertain"/>
<feature type="chain" id="PRO_0000222376" description="Putative uncharacterized 15.3 kDa protein">
    <location>
        <begin position="1"/>
        <end position="133"/>
    </location>
</feature>
<keyword id="KW-1185">Reference proteome</keyword>